<evidence type="ECO:0000255" key="1">
    <source>
        <dbReference type="HAMAP-Rule" id="MF_00315"/>
    </source>
</evidence>
<accession>A9M1G3</accession>
<comment type="function">
    <text evidence="1">Catalyzes the acyloin condensation reaction between C atoms 2 and 3 of pyruvate and glyceraldehyde 3-phosphate to yield 1-deoxy-D-xylulose-5-phosphate (DXP).</text>
</comment>
<comment type="catalytic activity">
    <reaction evidence="1">
        <text>D-glyceraldehyde 3-phosphate + pyruvate + H(+) = 1-deoxy-D-xylulose 5-phosphate + CO2</text>
        <dbReference type="Rhea" id="RHEA:12605"/>
        <dbReference type="ChEBI" id="CHEBI:15361"/>
        <dbReference type="ChEBI" id="CHEBI:15378"/>
        <dbReference type="ChEBI" id="CHEBI:16526"/>
        <dbReference type="ChEBI" id="CHEBI:57792"/>
        <dbReference type="ChEBI" id="CHEBI:59776"/>
        <dbReference type="EC" id="2.2.1.7"/>
    </reaction>
</comment>
<comment type="cofactor">
    <cofactor evidence="1">
        <name>Mg(2+)</name>
        <dbReference type="ChEBI" id="CHEBI:18420"/>
    </cofactor>
    <text evidence="1">Binds 1 Mg(2+) ion per subunit.</text>
</comment>
<comment type="cofactor">
    <cofactor evidence="1">
        <name>thiamine diphosphate</name>
        <dbReference type="ChEBI" id="CHEBI:58937"/>
    </cofactor>
    <text evidence="1">Binds 1 thiamine pyrophosphate per subunit.</text>
</comment>
<comment type="pathway">
    <text evidence="1">Metabolic intermediate biosynthesis; 1-deoxy-D-xylulose 5-phosphate biosynthesis; 1-deoxy-D-xylulose 5-phosphate from D-glyceraldehyde 3-phosphate and pyruvate: step 1/1.</text>
</comment>
<comment type="subunit">
    <text evidence="1">Homodimer.</text>
</comment>
<comment type="similarity">
    <text evidence="1">Belongs to the transketolase family. DXPS subfamily.</text>
</comment>
<organism>
    <name type="scientific">Neisseria meningitidis serogroup C (strain 053442)</name>
    <dbReference type="NCBI Taxonomy" id="374833"/>
    <lineage>
        <taxon>Bacteria</taxon>
        <taxon>Pseudomonadati</taxon>
        <taxon>Pseudomonadota</taxon>
        <taxon>Betaproteobacteria</taxon>
        <taxon>Neisseriales</taxon>
        <taxon>Neisseriaceae</taxon>
        <taxon>Neisseria</taxon>
    </lineage>
</organism>
<gene>
    <name evidence="1" type="primary">dxs</name>
    <name type="ordered locus">NMCC_0354</name>
</gene>
<feature type="chain" id="PRO_1000079095" description="1-deoxy-D-xylulose-5-phosphate synthase">
    <location>
        <begin position="1"/>
        <end position="635"/>
    </location>
</feature>
<feature type="binding site" evidence="1">
    <location>
        <position position="76"/>
    </location>
    <ligand>
        <name>thiamine diphosphate</name>
        <dbReference type="ChEBI" id="CHEBI:58937"/>
    </ligand>
</feature>
<feature type="binding site" evidence="1">
    <location>
        <begin position="117"/>
        <end position="119"/>
    </location>
    <ligand>
        <name>thiamine diphosphate</name>
        <dbReference type="ChEBI" id="CHEBI:58937"/>
    </ligand>
</feature>
<feature type="binding site" evidence="1">
    <location>
        <position position="148"/>
    </location>
    <ligand>
        <name>Mg(2+)</name>
        <dbReference type="ChEBI" id="CHEBI:18420"/>
    </ligand>
</feature>
<feature type="binding site" evidence="1">
    <location>
        <begin position="149"/>
        <end position="150"/>
    </location>
    <ligand>
        <name>thiamine diphosphate</name>
        <dbReference type="ChEBI" id="CHEBI:58937"/>
    </ligand>
</feature>
<feature type="binding site" evidence="1">
    <location>
        <position position="177"/>
    </location>
    <ligand>
        <name>Mg(2+)</name>
        <dbReference type="ChEBI" id="CHEBI:18420"/>
    </ligand>
</feature>
<feature type="binding site" evidence="1">
    <location>
        <position position="177"/>
    </location>
    <ligand>
        <name>thiamine diphosphate</name>
        <dbReference type="ChEBI" id="CHEBI:58937"/>
    </ligand>
</feature>
<feature type="binding site" evidence="1">
    <location>
        <position position="294"/>
    </location>
    <ligand>
        <name>thiamine diphosphate</name>
        <dbReference type="ChEBI" id="CHEBI:58937"/>
    </ligand>
</feature>
<feature type="binding site" evidence="1">
    <location>
        <position position="379"/>
    </location>
    <ligand>
        <name>thiamine diphosphate</name>
        <dbReference type="ChEBI" id="CHEBI:58937"/>
    </ligand>
</feature>
<dbReference type="EC" id="2.2.1.7" evidence="1"/>
<dbReference type="EMBL" id="CP000381">
    <property type="protein sequence ID" value="ABX72561.1"/>
    <property type="molecule type" value="Genomic_DNA"/>
</dbReference>
<dbReference type="RefSeq" id="WP_012221271.1">
    <property type="nucleotide sequence ID" value="NC_010120.1"/>
</dbReference>
<dbReference type="SMR" id="A9M1G3"/>
<dbReference type="KEGG" id="nmn:NMCC_0354"/>
<dbReference type="HOGENOM" id="CLU_009227_1_4_4"/>
<dbReference type="UniPathway" id="UPA00064">
    <property type="reaction ID" value="UER00091"/>
</dbReference>
<dbReference type="Proteomes" id="UP000001177">
    <property type="component" value="Chromosome"/>
</dbReference>
<dbReference type="GO" id="GO:0005829">
    <property type="term" value="C:cytosol"/>
    <property type="evidence" value="ECO:0007669"/>
    <property type="project" value="TreeGrafter"/>
</dbReference>
<dbReference type="GO" id="GO:0008661">
    <property type="term" value="F:1-deoxy-D-xylulose-5-phosphate synthase activity"/>
    <property type="evidence" value="ECO:0007669"/>
    <property type="project" value="UniProtKB-UniRule"/>
</dbReference>
<dbReference type="GO" id="GO:0000287">
    <property type="term" value="F:magnesium ion binding"/>
    <property type="evidence" value="ECO:0007669"/>
    <property type="project" value="UniProtKB-UniRule"/>
</dbReference>
<dbReference type="GO" id="GO:0030976">
    <property type="term" value="F:thiamine pyrophosphate binding"/>
    <property type="evidence" value="ECO:0007669"/>
    <property type="project" value="UniProtKB-UniRule"/>
</dbReference>
<dbReference type="GO" id="GO:0052865">
    <property type="term" value="P:1-deoxy-D-xylulose 5-phosphate biosynthetic process"/>
    <property type="evidence" value="ECO:0007669"/>
    <property type="project" value="UniProtKB-UniPathway"/>
</dbReference>
<dbReference type="GO" id="GO:0019288">
    <property type="term" value="P:isopentenyl diphosphate biosynthetic process, methylerythritol 4-phosphate pathway"/>
    <property type="evidence" value="ECO:0007669"/>
    <property type="project" value="TreeGrafter"/>
</dbReference>
<dbReference type="GO" id="GO:0016114">
    <property type="term" value="P:terpenoid biosynthetic process"/>
    <property type="evidence" value="ECO:0007669"/>
    <property type="project" value="UniProtKB-UniRule"/>
</dbReference>
<dbReference type="GO" id="GO:0009228">
    <property type="term" value="P:thiamine biosynthetic process"/>
    <property type="evidence" value="ECO:0007669"/>
    <property type="project" value="UniProtKB-UniRule"/>
</dbReference>
<dbReference type="CDD" id="cd02007">
    <property type="entry name" value="TPP_DXS"/>
    <property type="match status" value="1"/>
</dbReference>
<dbReference type="CDD" id="cd07033">
    <property type="entry name" value="TPP_PYR_DXS_TK_like"/>
    <property type="match status" value="1"/>
</dbReference>
<dbReference type="FunFam" id="3.40.50.920:FF:000002">
    <property type="entry name" value="1-deoxy-D-xylulose-5-phosphate synthase"/>
    <property type="match status" value="1"/>
</dbReference>
<dbReference type="FunFam" id="3.40.50.970:FF:000005">
    <property type="entry name" value="1-deoxy-D-xylulose-5-phosphate synthase"/>
    <property type="match status" value="1"/>
</dbReference>
<dbReference type="Gene3D" id="3.40.50.920">
    <property type="match status" value="1"/>
</dbReference>
<dbReference type="Gene3D" id="3.40.50.970">
    <property type="match status" value="2"/>
</dbReference>
<dbReference type="HAMAP" id="MF_00315">
    <property type="entry name" value="DXP_synth"/>
    <property type="match status" value="1"/>
</dbReference>
<dbReference type="InterPro" id="IPR005477">
    <property type="entry name" value="Dxylulose-5-P_synthase"/>
</dbReference>
<dbReference type="InterPro" id="IPR029061">
    <property type="entry name" value="THDP-binding"/>
</dbReference>
<dbReference type="InterPro" id="IPR009014">
    <property type="entry name" value="Transketo_C/PFOR_II"/>
</dbReference>
<dbReference type="InterPro" id="IPR005475">
    <property type="entry name" value="Transketolase-like_Pyr-bd"/>
</dbReference>
<dbReference type="InterPro" id="IPR020826">
    <property type="entry name" value="Transketolase_BS"/>
</dbReference>
<dbReference type="InterPro" id="IPR033248">
    <property type="entry name" value="Transketolase_C"/>
</dbReference>
<dbReference type="InterPro" id="IPR049557">
    <property type="entry name" value="Transketolase_CS"/>
</dbReference>
<dbReference type="NCBIfam" id="TIGR00204">
    <property type="entry name" value="dxs"/>
    <property type="match status" value="1"/>
</dbReference>
<dbReference type="NCBIfam" id="NF003933">
    <property type="entry name" value="PRK05444.2-2"/>
    <property type="match status" value="1"/>
</dbReference>
<dbReference type="PANTHER" id="PTHR43322">
    <property type="entry name" value="1-D-DEOXYXYLULOSE 5-PHOSPHATE SYNTHASE-RELATED"/>
    <property type="match status" value="1"/>
</dbReference>
<dbReference type="PANTHER" id="PTHR43322:SF5">
    <property type="entry name" value="1-DEOXY-D-XYLULOSE-5-PHOSPHATE SYNTHASE, CHLOROPLASTIC"/>
    <property type="match status" value="1"/>
</dbReference>
<dbReference type="Pfam" id="PF13292">
    <property type="entry name" value="DXP_synthase_N"/>
    <property type="match status" value="1"/>
</dbReference>
<dbReference type="Pfam" id="PF02779">
    <property type="entry name" value="Transket_pyr"/>
    <property type="match status" value="1"/>
</dbReference>
<dbReference type="Pfam" id="PF02780">
    <property type="entry name" value="Transketolase_C"/>
    <property type="match status" value="1"/>
</dbReference>
<dbReference type="SMART" id="SM00861">
    <property type="entry name" value="Transket_pyr"/>
    <property type="match status" value="1"/>
</dbReference>
<dbReference type="SUPFAM" id="SSF52518">
    <property type="entry name" value="Thiamin diphosphate-binding fold (THDP-binding)"/>
    <property type="match status" value="2"/>
</dbReference>
<dbReference type="SUPFAM" id="SSF52922">
    <property type="entry name" value="TK C-terminal domain-like"/>
    <property type="match status" value="1"/>
</dbReference>
<dbReference type="PROSITE" id="PS00801">
    <property type="entry name" value="TRANSKETOLASE_1"/>
    <property type="match status" value="1"/>
</dbReference>
<dbReference type="PROSITE" id="PS00802">
    <property type="entry name" value="TRANSKETOLASE_2"/>
    <property type="match status" value="1"/>
</dbReference>
<keyword id="KW-0414">Isoprene biosynthesis</keyword>
<keyword id="KW-0460">Magnesium</keyword>
<keyword id="KW-0479">Metal-binding</keyword>
<keyword id="KW-0784">Thiamine biosynthesis</keyword>
<keyword id="KW-0786">Thiamine pyrophosphate</keyword>
<keyword id="KW-0808">Transferase</keyword>
<name>DXS_NEIM0</name>
<reference key="1">
    <citation type="journal article" date="2008" name="Genomics">
        <title>Characterization of ST-4821 complex, a unique Neisseria meningitidis clone.</title>
        <authorList>
            <person name="Peng J."/>
            <person name="Yang L."/>
            <person name="Yang F."/>
            <person name="Yang J."/>
            <person name="Yan Y."/>
            <person name="Nie H."/>
            <person name="Zhang X."/>
            <person name="Xiong Z."/>
            <person name="Jiang Y."/>
            <person name="Cheng F."/>
            <person name="Xu X."/>
            <person name="Chen S."/>
            <person name="Sun L."/>
            <person name="Li W."/>
            <person name="Shen Y."/>
            <person name="Shao Z."/>
            <person name="Liang X."/>
            <person name="Xu J."/>
            <person name="Jin Q."/>
        </authorList>
    </citation>
    <scope>NUCLEOTIDE SEQUENCE [LARGE SCALE GENOMIC DNA]</scope>
    <source>
        <strain>053442</strain>
    </source>
</reference>
<proteinExistence type="inferred from homology"/>
<sequence length="635" mass="68551">MNPSPLLDLIDSPQDLRRLDKKQLPRLAGELRTFLLESVGQTGGHFASNLGAVELTIALHYVYDTPEDKLVWDVGHQSYPHKILTGRKNQMHTMRQYGGLAGFPKRCESEYDAFGVGHSSTSIGAALGMAAADKLLGSDRRSVAIIGDGAMTAGQAFEALNCAGDMDVDLLVVLNDNEMSISPNVGALPKYLASNVVRDMHGLLSTVKAQTGKVLDKIPGAMEFAQKVEHKIKTLAEEAEHAKQSLSLFENFGFRYTGPVDGHNVENLVDVLKDLRSRKGPQLLHVITKKGNGYKLAENDPVKYHAVANLPKESAAQMPSENKPAAKPTYTQVFGKWLCDRAAADSRLVAITPAMREGSGLVEFEQRFPDRYFDVGIAEQHAVTFAGGLACEGMKPVVAIYSTFLQRAYDQLVHDIALQNLPVLFAVDRAGIVGADGPTHAGLYDLSFLRCIPNMIVAAPSDENECRLLLSTCYQADAPAAVRYPRGTGTGVPVSDGMETVEIGKGIIRREGEKTAFIAFGSMVAPALAVAEKLNATVADMRFVKPIDEELIVRLARSHDRIVTLEENAEQGGAGGAVLEVLAKHGICKPVLLLGVADTVTGHGDPKKLLDDLGLSAEAVERRVRAWLSDRDAAN</sequence>
<protein>
    <recommendedName>
        <fullName evidence="1">1-deoxy-D-xylulose-5-phosphate synthase</fullName>
        <ecNumber evidence="1">2.2.1.7</ecNumber>
    </recommendedName>
    <alternativeName>
        <fullName evidence="1">1-deoxyxylulose-5-phosphate synthase</fullName>
        <shortName evidence="1">DXP synthase</shortName>
        <shortName evidence="1">DXPS</shortName>
    </alternativeName>
</protein>